<reference key="1">
    <citation type="journal article" date="1998" name="Nature">
        <title>Deciphering the biology of Mycobacterium tuberculosis from the complete genome sequence.</title>
        <authorList>
            <person name="Cole S.T."/>
            <person name="Brosch R."/>
            <person name="Parkhill J."/>
            <person name="Garnier T."/>
            <person name="Churcher C.M."/>
            <person name="Harris D.E."/>
            <person name="Gordon S.V."/>
            <person name="Eiglmeier K."/>
            <person name="Gas S."/>
            <person name="Barry C.E. III"/>
            <person name="Tekaia F."/>
            <person name="Badcock K."/>
            <person name="Basham D."/>
            <person name="Brown D."/>
            <person name="Chillingworth T."/>
            <person name="Connor R."/>
            <person name="Davies R.M."/>
            <person name="Devlin K."/>
            <person name="Feltwell T."/>
            <person name="Gentles S."/>
            <person name="Hamlin N."/>
            <person name="Holroyd S."/>
            <person name="Hornsby T."/>
            <person name="Jagels K."/>
            <person name="Krogh A."/>
            <person name="McLean J."/>
            <person name="Moule S."/>
            <person name="Murphy L.D."/>
            <person name="Oliver S."/>
            <person name="Osborne J."/>
            <person name="Quail M.A."/>
            <person name="Rajandream M.A."/>
            <person name="Rogers J."/>
            <person name="Rutter S."/>
            <person name="Seeger K."/>
            <person name="Skelton S."/>
            <person name="Squares S."/>
            <person name="Squares R."/>
            <person name="Sulston J.E."/>
            <person name="Taylor K."/>
            <person name="Whitehead S."/>
            <person name="Barrell B.G."/>
        </authorList>
    </citation>
    <scope>NUCLEOTIDE SEQUENCE [LARGE SCALE GENOMIC DNA]</scope>
    <source>
        <strain>ATCC 25618 / H37Rv</strain>
    </source>
</reference>
<reference key="2">
    <citation type="journal article" date="2002" name="Mol. Microbiol.">
        <title>Phospholipases C are involved in the virulence of Mycobacterium tuberculosis.</title>
        <authorList>
            <person name="Raynaud C."/>
            <person name="Guilhot C."/>
            <person name="Rauzier J."/>
            <person name="Bordat Y."/>
            <person name="Pelicic V."/>
            <person name="Manganelli R."/>
            <person name="Smith I."/>
            <person name="Gicquel B."/>
            <person name="Jackson M."/>
        </authorList>
    </citation>
    <scope>INDUCTION</scope>
    <source>
        <strain>H37Rv</strain>
    </source>
</reference>
<reference key="3">
    <citation type="journal article" date="2010" name="Biochim. Biophys. Acta">
        <title>Evidence for the cytotoxic effects of Mycobacterium tuberculosis phospholipase C towards macrophages.</title>
        <authorList>
            <person name="Bakala N'goma J.C."/>
            <person name="Schue M."/>
            <person name="Carriere F."/>
            <person name="Geerlof A."/>
            <person name="Canaan S."/>
        </authorList>
    </citation>
    <scope>FUNCTION</scope>
    <scope>CATALYTIC ACTIVITY</scope>
    <scope>BIOPHYSICOCHEMICAL PROPERTIES</scope>
    <scope>SUBCELLULAR LOCATION</scope>
    <source>
        <strain>H37Rv</strain>
    </source>
</reference>
<reference key="4">
    <citation type="journal article" date="2011" name="Mol. Cell. Proteomics">
        <title>Proteogenomic analysis of Mycobacterium tuberculosis by high resolution mass spectrometry.</title>
        <authorList>
            <person name="Kelkar D.S."/>
            <person name="Kumar D."/>
            <person name="Kumar P."/>
            <person name="Balakrishnan L."/>
            <person name="Muthusamy B."/>
            <person name="Yadav A.K."/>
            <person name="Shrivastava P."/>
            <person name="Marimuthu A."/>
            <person name="Anand S."/>
            <person name="Sundaram H."/>
            <person name="Kingsbury R."/>
            <person name="Harsha H.C."/>
            <person name="Nair B."/>
            <person name="Prasad T.S."/>
            <person name="Chauhan D.S."/>
            <person name="Katoch K."/>
            <person name="Katoch V.M."/>
            <person name="Kumar P."/>
            <person name="Chaerkady R."/>
            <person name="Ramachandran S."/>
            <person name="Dash D."/>
            <person name="Pandey A."/>
        </authorList>
    </citation>
    <scope>IDENTIFICATION BY MASS SPECTROMETRY [LARGE SCALE ANALYSIS]</scope>
    <source>
        <strain>ATCC 25618 / H37Rv</strain>
    </source>
</reference>
<accession>P9WIB1</accession>
<accession>L0TC24</accession>
<accession>P95245</accession>
<feature type="signal peptide" description="Tat-type signal" evidence="1">
    <location>
        <begin position="1"/>
        <end position="39"/>
    </location>
</feature>
<feature type="chain" id="PRO_0000023944" description="Phospholipase C C">
    <location>
        <begin position="40"/>
        <end position="517"/>
    </location>
</feature>
<evidence type="ECO:0000255" key="1">
    <source>
        <dbReference type="PROSITE-ProRule" id="PRU00648"/>
    </source>
</evidence>
<evidence type="ECO:0000269" key="2">
    <source>
    </source>
</evidence>
<evidence type="ECO:0000269" key="3">
    <source>
    </source>
</evidence>
<evidence type="ECO:0000303" key="4">
    <source>
    </source>
</evidence>
<evidence type="ECO:0000303" key="5">
    <source>
    </source>
</evidence>
<evidence type="ECO:0000305" key="6"/>
<sequence length="517" mass="55896">MVSQGAFAGMSRRAFLAKAAGAGAAAVLTDWAAPVIEKAYGAGPCSGHLTDIEHIVLCLQENRSFDHYFGTLSAVDGFDTPTPLFQQKGWNPETQALDPTGITLPYRINTTGGPNGVGECVNDPDHQWIAAHLSWNGGANDGWLPAQARTRSVANTPVVMGYYARPDIPIHYLLADTFTICDQYFSSLLGGTMPNRLYWISATVNPDGDQGGPQIVEPAIQPKLTFTWRIMPQNLSDAGISWKVYNSKLLGGLNDTSLSRNGYVGSFKQAADPRSDLARYGIAPAYPWDFIRDVINNTLPQVSWVVPLTVESEHPSFPVAVGAVTIVNLIRVLLRNPAVWEKTALIIAYDEHGGFFDHVTPLTAPEGTPGEWIPNSVDIDKVDGSGGIRGPIGLGFRVPCFVISPYSRGGLMVHDRFDHTSQLQLIGKRFGVPVPNLTPWRASVTGDMTSAFNFAAPPDPSPPNLDHPVRQLPKVAKCVPNVVLGFLNEGLPYRVPYPQTTPVQESGPARPIPSGIC</sequence>
<keyword id="KW-0134">Cell wall</keyword>
<keyword id="KW-0378">Hydrolase</keyword>
<keyword id="KW-1185">Reference proteome</keyword>
<keyword id="KW-0964">Secreted</keyword>
<keyword id="KW-0732">Signal</keyword>
<keyword id="KW-0843">Virulence</keyword>
<gene>
    <name evidence="4" type="primary">plcC</name>
    <name type="ordered locus">Rv2349c</name>
    <name type="ORF">MTCY98.18c</name>
</gene>
<dbReference type="EC" id="3.1.4.3" evidence="3"/>
<dbReference type="EMBL" id="AL123456">
    <property type="protein sequence ID" value="CCP45137.1"/>
    <property type="status" value="ALT_INIT"/>
    <property type="molecule type" value="Genomic_DNA"/>
</dbReference>
<dbReference type="PIR" id="F70662">
    <property type="entry name" value="F70662"/>
</dbReference>
<dbReference type="RefSeq" id="NP_216865.1">
    <property type="nucleotide sequence ID" value="NC_000962.3"/>
</dbReference>
<dbReference type="SMR" id="P9WIB1"/>
<dbReference type="FunCoup" id="P9WIB1">
    <property type="interactions" value="30"/>
</dbReference>
<dbReference type="STRING" id="83332.Rv2349c"/>
<dbReference type="SwissLipids" id="SLP:000001397"/>
<dbReference type="PaxDb" id="83332-Rv2349c"/>
<dbReference type="DNASU" id="886000"/>
<dbReference type="GeneID" id="886000"/>
<dbReference type="KEGG" id="mtu:Rv2349c"/>
<dbReference type="TubercuList" id="Rv2349c"/>
<dbReference type="eggNOG" id="COG3511">
    <property type="taxonomic scope" value="Bacteria"/>
</dbReference>
<dbReference type="InParanoid" id="P9WIB1"/>
<dbReference type="OrthoDB" id="4181857at2"/>
<dbReference type="PHI-base" id="PHI:5290"/>
<dbReference type="Proteomes" id="UP000001584">
    <property type="component" value="Chromosome"/>
</dbReference>
<dbReference type="GO" id="GO:0005576">
    <property type="term" value="C:extracellular region"/>
    <property type="evidence" value="ECO:0007669"/>
    <property type="project" value="UniProtKB-KW"/>
</dbReference>
<dbReference type="GO" id="GO:0034480">
    <property type="term" value="F:phosphatidylcholine phospholipase C activity"/>
    <property type="evidence" value="ECO:0000315"/>
    <property type="project" value="MTBBASE"/>
</dbReference>
<dbReference type="GO" id="GO:0052008">
    <property type="term" value="P:symbiont-mediated disruption of host cellular anatomical structure"/>
    <property type="evidence" value="ECO:0000314"/>
    <property type="project" value="MTBBASE"/>
</dbReference>
<dbReference type="FunFam" id="3.40.720.10:FF:000034">
    <property type="entry name" value="Membrane-associated phospholipase C"/>
    <property type="match status" value="1"/>
</dbReference>
<dbReference type="FunFam" id="3.40.720.10:FF:000036">
    <property type="entry name" value="Membrane-associated phospholipase C"/>
    <property type="match status" value="1"/>
</dbReference>
<dbReference type="Gene3D" id="3.40.720.10">
    <property type="entry name" value="Alkaline Phosphatase, subunit A"/>
    <property type="match status" value="2"/>
</dbReference>
<dbReference type="InterPro" id="IPR017850">
    <property type="entry name" value="Alkaline_phosphatase_core_sf"/>
</dbReference>
<dbReference type="InterPro" id="IPR007312">
    <property type="entry name" value="Phosphoesterase"/>
</dbReference>
<dbReference type="InterPro" id="IPR006311">
    <property type="entry name" value="TAT_signal"/>
</dbReference>
<dbReference type="PANTHER" id="PTHR31956:SF1">
    <property type="entry name" value="NON-SPECIFIC PHOSPHOLIPASE C1"/>
    <property type="match status" value="1"/>
</dbReference>
<dbReference type="PANTHER" id="PTHR31956">
    <property type="entry name" value="NON-SPECIFIC PHOSPHOLIPASE C4-RELATED"/>
    <property type="match status" value="1"/>
</dbReference>
<dbReference type="Pfam" id="PF04185">
    <property type="entry name" value="Phosphoesterase"/>
    <property type="match status" value="1"/>
</dbReference>
<dbReference type="PROSITE" id="PS51318">
    <property type="entry name" value="TAT"/>
    <property type="match status" value="1"/>
</dbReference>
<name>PHLC_MYCTU</name>
<proteinExistence type="evidence at protein level"/>
<organism>
    <name type="scientific">Mycobacterium tuberculosis (strain ATCC 25618 / H37Rv)</name>
    <dbReference type="NCBI Taxonomy" id="83332"/>
    <lineage>
        <taxon>Bacteria</taxon>
        <taxon>Bacillati</taxon>
        <taxon>Actinomycetota</taxon>
        <taxon>Actinomycetes</taxon>
        <taxon>Mycobacteriales</taxon>
        <taxon>Mycobacteriaceae</taxon>
        <taxon>Mycobacterium</taxon>
        <taxon>Mycobacterium tuberculosis complex</taxon>
    </lineage>
</organism>
<comment type="function">
    <text evidence="3">Involved in virulence (PubMed:20736081). Induces cytotoxic effects on mouse macrophage cell lines, via direct or indirect enzymatic hydrolysis of cell membrane phospholipids (PubMed:20736081). Hydrolyzes phosphatidylcholine (PubMed:20736081). Does not have hemolytic activity (PubMed:20736081).</text>
</comment>
<comment type="catalytic activity">
    <reaction evidence="3">
        <text>a 1,2-diacyl-sn-glycero-3-phosphocholine + H2O = phosphocholine + a 1,2-diacyl-sn-glycerol + H(+)</text>
        <dbReference type="Rhea" id="RHEA:10604"/>
        <dbReference type="ChEBI" id="CHEBI:15377"/>
        <dbReference type="ChEBI" id="CHEBI:15378"/>
        <dbReference type="ChEBI" id="CHEBI:17815"/>
        <dbReference type="ChEBI" id="CHEBI:57643"/>
        <dbReference type="ChEBI" id="CHEBI:295975"/>
        <dbReference type="EC" id="3.1.4.3"/>
    </reaction>
    <physiologicalReaction direction="left-to-right" evidence="3">
        <dbReference type="Rhea" id="RHEA:10605"/>
    </physiologicalReaction>
</comment>
<comment type="catalytic activity">
    <reaction evidence="3">
        <text>1,2-dihexadecanoyl-sn-glycero-3-phosphocholine + H2O = 1,2-dihexadecanoyl-sn-glycerol + phosphocholine + H(+)</text>
        <dbReference type="Rhea" id="RHEA:45304"/>
        <dbReference type="ChEBI" id="CHEBI:15377"/>
        <dbReference type="ChEBI" id="CHEBI:15378"/>
        <dbReference type="ChEBI" id="CHEBI:72999"/>
        <dbReference type="ChEBI" id="CHEBI:82929"/>
        <dbReference type="ChEBI" id="CHEBI:295975"/>
    </reaction>
    <physiologicalReaction direction="left-to-right" evidence="3">
        <dbReference type="Rhea" id="RHEA:45305"/>
    </physiologicalReaction>
</comment>
<comment type="biophysicochemical properties">
    <phDependence>
        <text evidence="3">Optimum pH is 7.</text>
    </phDependence>
    <temperatureDependence>
        <text evidence="3">Optimum temperature is 37 degrees Celsius.</text>
    </temperatureDependence>
</comment>
<comment type="subcellular location">
    <subcellularLocation>
        <location evidence="3">Secreted</location>
        <location evidence="3">Cell wall</location>
    </subcellularLocation>
    <text evidence="3">Remains associated with the cell.</text>
</comment>
<comment type="induction">
    <text evidence="2">Expression is induced in vitro in the presence of phosphatidylcholine. Also induced upon infection of THP-1 macrophages.</text>
</comment>
<comment type="PTM">
    <text evidence="1">Predicted to be exported by the Tat system. The position of the signal peptide cleavage has not been experimentally proven.</text>
</comment>
<comment type="miscellaneous">
    <text evidence="6">Polymorphism was discovered in the phospholipase plcA/B/C region.</text>
</comment>
<comment type="similarity">
    <text evidence="6">Belongs to the bacterial phospholipase C family.</text>
</comment>
<comment type="sequence caution" evidence="6">
    <conflict type="erroneous initiation">
        <sequence resource="EMBL-CDS" id="CCP45137"/>
    </conflict>
    <text>Truncated N-terminus.</text>
</comment>
<protein>
    <recommendedName>
        <fullName evidence="6">Phospholipase C C</fullName>
        <shortName evidence="5">PLC-C</shortName>
        <ecNumber evidence="3">3.1.4.3</ecNumber>
    </recommendedName>
</protein>